<evidence type="ECO:0000250" key="1">
    <source>
        <dbReference type="UniProtKB" id="P9WJD9"/>
    </source>
</evidence>
<evidence type="ECO:0000256" key="2">
    <source>
        <dbReference type="SAM" id="MobiDB-lite"/>
    </source>
</evidence>
<evidence type="ECO:0000269" key="3">
    <source>
    </source>
</evidence>
<evidence type="ECO:0000305" key="4"/>
<evidence type="ECO:0007829" key="5">
    <source>
        <dbReference type="PDB" id="7P0Z"/>
    </source>
</evidence>
<reference key="1">
    <citation type="journal article" date="2008" name="Genome Res.">
        <title>Insights from the complete genome sequence of Mycobacterium marinum on the evolution of Mycobacterium tuberculosis.</title>
        <authorList>
            <person name="Stinear T.P."/>
            <person name="Seemann T."/>
            <person name="Harrison P.F."/>
            <person name="Jenkin G.A."/>
            <person name="Davies J.K."/>
            <person name="Johnson P.D."/>
            <person name="Abdellah Z."/>
            <person name="Arrowsmith C."/>
            <person name="Chillingworth T."/>
            <person name="Churcher C."/>
            <person name="Clarke K."/>
            <person name="Cronin A."/>
            <person name="Davis P."/>
            <person name="Goodhead I."/>
            <person name="Holroyd N."/>
            <person name="Jagels K."/>
            <person name="Lord A."/>
            <person name="Moule S."/>
            <person name="Mungall K."/>
            <person name="Norbertczak H."/>
            <person name="Quail M.A."/>
            <person name="Rabbinowitsch E."/>
            <person name="Walker D."/>
            <person name="White B."/>
            <person name="Whitehead S."/>
            <person name="Small P.L."/>
            <person name="Brosch R."/>
            <person name="Ramakrishnan L."/>
            <person name="Fischbach M.A."/>
            <person name="Parkhill J."/>
            <person name="Cole S.T."/>
        </authorList>
    </citation>
    <scope>NUCLEOTIDE SEQUENCE [LARGE SCALE GENOMIC DNA]</scope>
    <source>
        <strain>ATCC BAA-535 / M</strain>
    </source>
</reference>
<reference key="2">
    <citation type="journal article" date="2007" name="Mol. Microbiol.">
        <title>A unique Mycobacterium ESX-1 protein co-secretes with CFP-10/ESAT-6 and is necessary for inhibiting phagosome maturation.</title>
        <authorList>
            <person name="Xu J."/>
            <person name="Laine O."/>
            <person name="Masciocchi M."/>
            <person name="Manoranjan J."/>
            <person name="Smith J."/>
            <person name="Du S.J."/>
            <person name="Edwards N."/>
            <person name="Zhu X."/>
            <person name="Fenselau C."/>
            <person name="Gao L.Y."/>
        </authorList>
    </citation>
    <scope>IDENTIFICATION BY MASS SPECTROMETRY</scope>
    <scope>SUBCELLULAR LOCATION</scope>
    <scope>DOMAIN</scope>
    <scope>CLEAVAGE</scope>
    <scope>DISRUPTION PHENOTYPE</scope>
</reference>
<comment type="subcellular location">
    <subcellularLocation>
        <location evidence="3">Secreted</location>
    </subcellularLocation>
    <text evidence="3">Secreted via the ESX-1 / type VII secretion system (T7SS).</text>
</comment>
<comment type="domain">
    <text evidence="3">The C-terminus is necessary for the co-dependent secretion, for maintaining the EsxA (ESAT-6) cellular levels, and for interacting with EsxA.</text>
</comment>
<comment type="PTM">
    <text evidence="3">Cleaved at close to the C-terminus during secretion.</text>
</comment>
<comment type="disruption phenotype">
    <text evidence="3">Mutant is extremely defective in intracellular growth.</text>
</comment>
<comment type="miscellaneous">
    <text evidence="3">Secretion of EspB, EsxA and EsxB is mutually dependent.</text>
</comment>
<comment type="similarity">
    <text evidence="4">Belongs to the EspB family.</text>
</comment>
<name>ESPB_MYCMM</name>
<organism>
    <name type="scientific">Mycobacterium marinum (strain ATCC BAA-535 / M)</name>
    <dbReference type="NCBI Taxonomy" id="216594"/>
    <lineage>
        <taxon>Bacteria</taxon>
        <taxon>Bacillati</taxon>
        <taxon>Actinomycetota</taxon>
        <taxon>Actinomycetes</taxon>
        <taxon>Mycobacteriales</taxon>
        <taxon>Mycobacteriaceae</taxon>
        <taxon>Mycobacterium</taxon>
        <taxon>Mycobacterium ulcerans group</taxon>
    </lineage>
</organism>
<proteinExistence type="evidence at protein level"/>
<accession>B2HNQ9</accession>
<sequence>MSQPQTVTVDQQEILNRADEVEAPMATPPTDVPQAPSGLTAANNAAEQLAVSADNVRLYLQAGERERQRLATSLRNAAAAYGEVEDESATALDNDGNGEVDAQSAGGAGAGQTESLEETPKVAAAGESDFTDLKTAATKLESGDQGTSMVNFADGWNNFNLSLQRDIKRFRIFENWEGDAATACEASMDQQKEWILHMAKLSASLAKQANFMAQLQLWARRGHPTLADIVELERLAKDPDYQEQAIKLYAEYQETSEKVLSEYNTKADLEPVNPPKPPAAIKIDPPPPAQPQGLIPGFLMPPGDGSTGLASGMTPPMIPPTGGAGGTPDVNTAELTSAGREAASNLSKGLGVKPMSLGGGGGGLGGMPMGDAALAGGESVRPAAAGDIAGAGQGGGAAGRGMAGGGMGMPMGGAGQGQGGAKSKGAQQDEEALYTEDREWTEAVIGNRRRQDNK</sequence>
<gene>
    <name evidence="1" type="primary">espB</name>
    <name type="ordered locus">MMAR_5457</name>
</gene>
<dbReference type="EMBL" id="CP000854">
    <property type="protein sequence ID" value="ACC43864.1"/>
    <property type="molecule type" value="Genomic_DNA"/>
</dbReference>
<dbReference type="RefSeq" id="WP_012396956.1">
    <property type="nucleotide sequence ID" value="NC_010612.1"/>
</dbReference>
<dbReference type="PDB" id="7P0Z">
    <property type="method" value="EM"/>
    <property type="resolution" value="2.43 A"/>
    <property type="chains" value="A/B/C/D/E/F/G=2-286"/>
</dbReference>
<dbReference type="PDBsum" id="7P0Z"/>
<dbReference type="EMDB" id="EMD-13153"/>
<dbReference type="SMR" id="B2HNQ9"/>
<dbReference type="STRING" id="216594.MMAR_5457"/>
<dbReference type="KEGG" id="mmi:MMAR_5457"/>
<dbReference type="eggNOG" id="ENOG50341Q7">
    <property type="taxonomic scope" value="Bacteria"/>
</dbReference>
<dbReference type="HOGENOM" id="CLU_039721_0_0_11"/>
<dbReference type="OrthoDB" id="4753912at2"/>
<dbReference type="Proteomes" id="UP000001190">
    <property type="component" value="Chromosome"/>
</dbReference>
<dbReference type="GO" id="GO:0005576">
    <property type="term" value="C:extracellular region"/>
    <property type="evidence" value="ECO:0007669"/>
    <property type="project" value="UniProtKB-SubCell"/>
</dbReference>
<dbReference type="Gene3D" id="1.20.1260.20">
    <property type="entry name" value="PPE superfamily"/>
    <property type="match status" value="1"/>
</dbReference>
<dbReference type="InterPro" id="IPR041275">
    <property type="entry name" value="EspB_PE"/>
</dbReference>
<dbReference type="InterPro" id="IPR054056">
    <property type="entry name" value="EspB_PPE"/>
</dbReference>
<dbReference type="InterPro" id="IPR038332">
    <property type="entry name" value="PPE_sf"/>
</dbReference>
<dbReference type="Pfam" id="PF18625">
    <property type="entry name" value="EspB_PE"/>
    <property type="match status" value="1"/>
</dbReference>
<dbReference type="Pfam" id="PF21856">
    <property type="entry name" value="EspB_PPE"/>
    <property type="match status" value="1"/>
</dbReference>
<protein>
    <recommendedName>
        <fullName evidence="1">ESX-1 secretion-associated protein EspB</fullName>
    </recommendedName>
</protein>
<keyword id="KW-0002">3D-structure</keyword>
<keyword id="KW-1185">Reference proteome</keyword>
<keyword id="KW-0964">Secreted</keyword>
<feature type="chain" id="PRO_0000394201" description="ESX-1 secretion-associated protein EspB">
    <location>
        <begin position="1"/>
        <end position="454"/>
    </location>
</feature>
<feature type="region of interest" description="Disordered" evidence="2">
    <location>
        <begin position="17"/>
        <end position="40"/>
    </location>
</feature>
<feature type="region of interest" description="Disordered" evidence="2">
    <location>
        <begin position="82"/>
        <end position="128"/>
    </location>
</feature>
<feature type="region of interest" description="Disordered" evidence="2">
    <location>
        <begin position="391"/>
        <end position="454"/>
    </location>
</feature>
<feature type="compositionally biased region" description="Gly residues" evidence="2">
    <location>
        <begin position="391"/>
        <end position="422"/>
    </location>
</feature>
<feature type="helix" evidence="5">
    <location>
        <begin position="11"/>
        <end position="21"/>
    </location>
</feature>
<feature type="strand" evidence="5">
    <location>
        <begin position="36"/>
        <end position="38"/>
    </location>
</feature>
<feature type="helix" evidence="5">
    <location>
        <begin position="40"/>
        <end position="79"/>
    </location>
</feature>
<feature type="helix" evidence="5">
    <location>
        <begin position="131"/>
        <end position="141"/>
    </location>
</feature>
<feature type="turn" evidence="5">
    <location>
        <begin position="143"/>
        <end position="146"/>
    </location>
</feature>
<feature type="helix" evidence="5">
    <location>
        <begin position="147"/>
        <end position="164"/>
    </location>
</feature>
<feature type="helix" evidence="5">
    <location>
        <begin position="168"/>
        <end position="170"/>
    </location>
</feature>
<feature type="helix" evidence="5">
    <location>
        <begin position="179"/>
        <end position="222"/>
    </location>
</feature>
<feature type="helix" evidence="5">
    <location>
        <begin position="226"/>
        <end position="235"/>
    </location>
</feature>
<feature type="helix" evidence="5">
    <location>
        <begin position="242"/>
        <end position="266"/>
    </location>
</feature>